<sequence length="396" mass="44779">MAPKKAGDGVKAHPIIGRFGTSLKIGIVGLPNVGKSTFFNVLTKSQAAAENFPFCTIDPNESRVPVPDDRFDFLCQYHKPPSKIPAFLNVVDIAGLVKGAHTGQGLGNSFLSHINACDGIFHLMRAFEDDDITHVEGSVDPVRDIEIIHEELRLKDEELITQSIDKLEKVAVRGGDKKLKPEYDVMCKIKTWVIDEKKAVRFYHDWNDKEIDVLNKHLFFTSKPMIYLVNLSEKDYIRKKNKWLIKIKEWVDKHDPGALVIPFSGALELKLQDMSAEEKQKYLEENMTQSALPKIIKAGYAALQLEYFFTAGPDEVRAWTIRKGTKAPQAAGKIHTDFEKGFIMAEVMKYEDFKEGGSEAAVKAAGKYRQQGRNYIVEDGDIIFFKFNTPQQPKKK</sequence>
<keyword id="KW-0067">ATP-binding</keyword>
<keyword id="KW-0963">Cytoplasm</keyword>
<keyword id="KW-0378">Hydrolase</keyword>
<keyword id="KW-0460">Magnesium</keyword>
<keyword id="KW-0479">Metal-binding</keyword>
<keyword id="KW-0547">Nucleotide-binding</keyword>
<keyword id="KW-0539">Nucleus</keyword>
<keyword id="KW-1185">Reference proteome</keyword>
<dbReference type="EMBL" id="AJ719559">
    <property type="protein sequence ID" value="CAG31218.1"/>
    <property type="molecule type" value="mRNA"/>
</dbReference>
<dbReference type="RefSeq" id="NP_001026425.1">
    <property type="nucleotide sequence ID" value="NM_001031254.3"/>
</dbReference>
<dbReference type="SMR" id="Q5ZM25"/>
<dbReference type="FunCoup" id="Q5ZM25">
    <property type="interactions" value="2215"/>
</dbReference>
<dbReference type="STRING" id="9031.ENSGALP00000045498"/>
<dbReference type="PaxDb" id="9031-ENSGALP00000015171"/>
<dbReference type="Ensembl" id="ENSGALT00010064860.1">
    <property type="protein sequence ID" value="ENSGALP00010039644.1"/>
    <property type="gene ID" value="ENSGALG00010026724.1"/>
</dbReference>
<dbReference type="GeneID" id="424144"/>
<dbReference type="KEGG" id="gga:424144"/>
<dbReference type="CTD" id="29789"/>
<dbReference type="VEuPathDB" id="HostDB:geneid_424144"/>
<dbReference type="eggNOG" id="KOG1491">
    <property type="taxonomic scope" value="Eukaryota"/>
</dbReference>
<dbReference type="GeneTree" id="ENSGT00390000000673"/>
<dbReference type="HOGENOM" id="CLU_018395_1_0_1"/>
<dbReference type="InParanoid" id="Q5ZM25"/>
<dbReference type="OrthoDB" id="424823at2759"/>
<dbReference type="PhylomeDB" id="Q5ZM25"/>
<dbReference type="TreeFam" id="TF300774"/>
<dbReference type="Reactome" id="R-GGA-114608">
    <property type="pathway name" value="Platelet degranulation"/>
</dbReference>
<dbReference type="PRO" id="PR:Q5ZM25"/>
<dbReference type="Proteomes" id="UP000000539">
    <property type="component" value="Chromosome 7"/>
</dbReference>
<dbReference type="Bgee" id="ENSGALG00000009325">
    <property type="expression patterns" value="Expressed in skeletal muscle tissue and 13 other cell types or tissues"/>
</dbReference>
<dbReference type="GO" id="GO:0005737">
    <property type="term" value="C:cytoplasm"/>
    <property type="evidence" value="ECO:0000318"/>
    <property type="project" value="GO_Central"/>
</dbReference>
<dbReference type="GO" id="GO:0005730">
    <property type="term" value="C:nucleolus"/>
    <property type="evidence" value="ECO:0007669"/>
    <property type="project" value="UniProtKB-SubCell"/>
</dbReference>
<dbReference type="GO" id="GO:0005524">
    <property type="term" value="F:ATP binding"/>
    <property type="evidence" value="ECO:0007669"/>
    <property type="project" value="UniProtKB-UniRule"/>
</dbReference>
<dbReference type="GO" id="GO:0016887">
    <property type="term" value="F:ATP hydrolysis activity"/>
    <property type="evidence" value="ECO:0000318"/>
    <property type="project" value="GO_Central"/>
</dbReference>
<dbReference type="GO" id="GO:0005525">
    <property type="term" value="F:GTP binding"/>
    <property type="evidence" value="ECO:0007669"/>
    <property type="project" value="InterPro"/>
</dbReference>
<dbReference type="GO" id="GO:0046872">
    <property type="term" value="F:metal ion binding"/>
    <property type="evidence" value="ECO:0007669"/>
    <property type="project" value="UniProtKB-KW"/>
</dbReference>
<dbReference type="GO" id="GO:0043023">
    <property type="term" value="F:ribosomal large subunit binding"/>
    <property type="evidence" value="ECO:0007669"/>
    <property type="project" value="UniProtKB-UniRule"/>
</dbReference>
<dbReference type="CDD" id="cd04867">
    <property type="entry name" value="TGS_YchF_OLA1"/>
    <property type="match status" value="1"/>
</dbReference>
<dbReference type="CDD" id="cd01900">
    <property type="entry name" value="YchF"/>
    <property type="match status" value="1"/>
</dbReference>
<dbReference type="FunFam" id="1.10.150.300:FF:000003">
    <property type="entry name" value="Obg-like ATPase 1"/>
    <property type="match status" value="1"/>
</dbReference>
<dbReference type="FunFam" id="3.10.20.30:FF:000029">
    <property type="entry name" value="Obg-like ATPase 1"/>
    <property type="match status" value="1"/>
</dbReference>
<dbReference type="Gene3D" id="3.10.20.30">
    <property type="match status" value="1"/>
</dbReference>
<dbReference type="Gene3D" id="3.40.50.300">
    <property type="entry name" value="P-loop containing nucleotide triphosphate hydrolases"/>
    <property type="match status" value="1"/>
</dbReference>
<dbReference type="Gene3D" id="1.10.150.300">
    <property type="entry name" value="TGS-like domain"/>
    <property type="match status" value="1"/>
</dbReference>
<dbReference type="HAMAP" id="MF_00944">
    <property type="entry name" value="YchF_OLA1_ATPase"/>
    <property type="match status" value="1"/>
</dbReference>
<dbReference type="InterPro" id="IPR004396">
    <property type="entry name" value="ATPase_YchF/OLA1"/>
</dbReference>
<dbReference type="InterPro" id="IPR012675">
    <property type="entry name" value="Beta-grasp_dom_sf"/>
</dbReference>
<dbReference type="InterPro" id="IPR031167">
    <property type="entry name" value="G_OBG"/>
</dbReference>
<dbReference type="InterPro" id="IPR006073">
    <property type="entry name" value="GTP-bd"/>
</dbReference>
<dbReference type="InterPro" id="IPR027417">
    <property type="entry name" value="P-loop_NTPase"/>
</dbReference>
<dbReference type="InterPro" id="IPR004095">
    <property type="entry name" value="TGS"/>
</dbReference>
<dbReference type="InterPro" id="IPR012676">
    <property type="entry name" value="TGS-like"/>
</dbReference>
<dbReference type="InterPro" id="IPR023192">
    <property type="entry name" value="TGS-like_dom_sf"/>
</dbReference>
<dbReference type="InterPro" id="IPR013029">
    <property type="entry name" value="YchF_C"/>
</dbReference>
<dbReference type="InterPro" id="IPR041706">
    <property type="entry name" value="YchF_N"/>
</dbReference>
<dbReference type="NCBIfam" id="TIGR00092">
    <property type="entry name" value="redox-regulated ATPase YchF"/>
    <property type="match status" value="1"/>
</dbReference>
<dbReference type="PANTHER" id="PTHR23305">
    <property type="entry name" value="OBG GTPASE FAMILY"/>
    <property type="match status" value="1"/>
</dbReference>
<dbReference type="PANTHER" id="PTHR23305:SF11">
    <property type="entry name" value="OBG-LIKE ATPASE 1"/>
    <property type="match status" value="1"/>
</dbReference>
<dbReference type="Pfam" id="PF01926">
    <property type="entry name" value="MMR_HSR1"/>
    <property type="match status" value="1"/>
</dbReference>
<dbReference type="Pfam" id="PF06071">
    <property type="entry name" value="YchF-GTPase_C"/>
    <property type="match status" value="1"/>
</dbReference>
<dbReference type="PIRSF" id="PIRSF006641">
    <property type="entry name" value="CHP00092"/>
    <property type="match status" value="1"/>
</dbReference>
<dbReference type="PRINTS" id="PR00326">
    <property type="entry name" value="GTP1OBG"/>
</dbReference>
<dbReference type="SUPFAM" id="SSF52540">
    <property type="entry name" value="P-loop containing nucleoside triphosphate hydrolases"/>
    <property type="match status" value="1"/>
</dbReference>
<dbReference type="SUPFAM" id="SSF81271">
    <property type="entry name" value="TGS-like"/>
    <property type="match status" value="1"/>
</dbReference>
<dbReference type="PROSITE" id="PS51710">
    <property type="entry name" value="G_OBG"/>
    <property type="match status" value="1"/>
</dbReference>
<dbReference type="PROSITE" id="PS51880">
    <property type="entry name" value="TGS"/>
    <property type="match status" value="1"/>
</dbReference>
<reference key="1">
    <citation type="journal article" date="2005" name="Genome Biol.">
        <title>Full-length cDNAs from chicken bursal lymphocytes to facilitate gene function analysis.</title>
        <authorList>
            <person name="Caldwell R.B."/>
            <person name="Kierzek A.M."/>
            <person name="Arakawa H."/>
            <person name="Bezzubov Y."/>
            <person name="Zaim J."/>
            <person name="Fiedler P."/>
            <person name="Kutter S."/>
            <person name="Blagodatski A."/>
            <person name="Kostovska D."/>
            <person name="Koter M."/>
            <person name="Plachy J."/>
            <person name="Carninci P."/>
            <person name="Hayashizaki Y."/>
            <person name="Buerstedde J.-M."/>
        </authorList>
    </citation>
    <scope>NUCLEOTIDE SEQUENCE [LARGE SCALE MRNA]</scope>
    <source>
        <strain>CB</strain>
        <tissue>Bursa of Fabricius</tissue>
    </source>
</reference>
<accession>Q5ZM25</accession>
<feature type="chain" id="PRO_0000354699" description="Obg-like ATPase 1">
    <location>
        <begin position="1"/>
        <end position="396"/>
    </location>
</feature>
<feature type="domain" description="OBG-type G">
    <location>
        <begin position="23"/>
        <end position="283"/>
    </location>
</feature>
<feature type="domain" description="TGS" evidence="3">
    <location>
        <begin position="304"/>
        <end position="387"/>
    </location>
</feature>
<feature type="short sequence motif" description="Nuclear export signal" evidence="2">
    <location>
        <begin position="267"/>
        <end position="274"/>
    </location>
</feature>
<feature type="binding site" evidence="2">
    <location>
        <begin position="32"/>
        <end position="37"/>
    </location>
    <ligand>
        <name>ATP</name>
        <dbReference type="ChEBI" id="CHEBI:30616"/>
    </ligand>
</feature>
<feature type="binding site" evidence="1">
    <location>
        <position position="36"/>
    </location>
    <ligand>
        <name>Mg(2+)</name>
        <dbReference type="ChEBI" id="CHEBI:18420"/>
    </ligand>
</feature>
<feature type="binding site" evidence="1">
    <location>
        <position position="56"/>
    </location>
    <ligand>
        <name>Mg(2+)</name>
        <dbReference type="ChEBI" id="CHEBI:18420"/>
    </ligand>
</feature>
<feature type="binding site" evidence="2">
    <location>
        <position position="231"/>
    </location>
    <ligand>
        <name>ATP</name>
        <dbReference type="ChEBI" id="CHEBI:30616"/>
    </ligand>
</feature>
<evidence type="ECO:0000250" key="1"/>
<evidence type="ECO:0000255" key="2">
    <source>
        <dbReference type="HAMAP-Rule" id="MF_03167"/>
    </source>
</evidence>
<evidence type="ECO:0000255" key="3">
    <source>
        <dbReference type="PROSITE-ProRule" id="PRU01228"/>
    </source>
</evidence>
<comment type="function">
    <text evidence="2">Hydrolyzes ATP, and can also hydrolyze GTP with lower efficiency. Has lower affinity for GTP.</text>
</comment>
<comment type="cofactor">
    <cofactor evidence="1">
        <name>Mg(2+)</name>
        <dbReference type="ChEBI" id="CHEBI:18420"/>
    </cofactor>
</comment>
<comment type="subunit">
    <text evidence="2">Monomer.</text>
</comment>
<comment type="subcellular location">
    <subcellularLocation>
        <location evidence="2">Cytoplasm</location>
    </subcellularLocation>
    <subcellularLocation>
        <location evidence="2">Nucleus</location>
    </subcellularLocation>
    <subcellularLocation>
        <location evidence="2">Nucleus</location>
        <location evidence="2">Nucleolus</location>
    </subcellularLocation>
    <text evidence="2">Predominantly cytoplasmic, shuttles between the nucleus and the cytoplasm.</text>
</comment>
<comment type="similarity">
    <text evidence="2">Belongs to the TRAFAC class OBG-HflX-like GTPase superfamily. OBG GTPase family. YchF/OLA1 subfamily.</text>
</comment>
<name>OLA1_CHICK</name>
<gene>
    <name evidence="2" type="primary">OLA1</name>
    <name type="ORF">RCJMB04_3f20</name>
</gene>
<organism>
    <name type="scientific">Gallus gallus</name>
    <name type="common">Chicken</name>
    <dbReference type="NCBI Taxonomy" id="9031"/>
    <lineage>
        <taxon>Eukaryota</taxon>
        <taxon>Metazoa</taxon>
        <taxon>Chordata</taxon>
        <taxon>Craniata</taxon>
        <taxon>Vertebrata</taxon>
        <taxon>Euteleostomi</taxon>
        <taxon>Archelosauria</taxon>
        <taxon>Archosauria</taxon>
        <taxon>Dinosauria</taxon>
        <taxon>Saurischia</taxon>
        <taxon>Theropoda</taxon>
        <taxon>Coelurosauria</taxon>
        <taxon>Aves</taxon>
        <taxon>Neognathae</taxon>
        <taxon>Galloanserae</taxon>
        <taxon>Galliformes</taxon>
        <taxon>Phasianidae</taxon>
        <taxon>Phasianinae</taxon>
        <taxon>Gallus</taxon>
    </lineage>
</organism>
<protein>
    <recommendedName>
        <fullName evidence="2">Obg-like ATPase 1</fullName>
    </recommendedName>
</protein>
<proteinExistence type="evidence at transcript level"/>